<sequence>MWKEKGNAIGNWLLAITAIFGFITLIWIPQASAECQTRSIYCYECDSWTDARCKDPFNYTALPRDQPPLMTCNGCCVKMVRHQRSREVVRRMCTSQLQINLFMVDHVCMMESSGNGHMCFCEEDMCNSSKDLYSHGHQLHLIITIAVAVSWLMGQLLNR</sequence>
<keyword id="KW-0090">Biological rhythms</keyword>
<keyword id="KW-1003">Cell membrane</keyword>
<keyword id="KW-1015">Disulfide bond</keyword>
<keyword id="KW-0325">Glycoprotein</keyword>
<keyword id="KW-0336">GPI-anchor</keyword>
<keyword id="KW-0449">Lipoprotein</keyword>
<keyword id="KW-0472">Membrane</keyword>
<keyword id="KW-1185">Reference proteome</keyword>
<keyword id="KW-0732">Signal</keyword>
<keyword id="KW-0812">Transmembrane</keyword>
<keyword id="KW-1133">Transmembrane helix</keyword>
<organism>
    <name type="scientific">Drosophila pseudoobscura pseudoobscura</name>
    <name type="common">Fruit fly</name>
    <dbReference type="NCBI Taxonomy" id="46245"/>
    <lineage>
        <taxon>Eukaryota</taxon>
        <taxon>Metazoa</taxon>
        <taxon>Ecdysozoa</taxon>
        <taxon>Arthropoda</taxon>
        <taxon>Hexapoda</taxon>
        <taxon>Insecta</taxon>
        <taxon>Pterygota</taxon>
        <taxon>Neoptera</taxon>
        <taxon>Endopterygota</taxon>
        <taxon>Diptera</taxon>
        <taxon>Brachycera</taxon>
        <taxon>Muscomorpha</taxon>
        <taxon>Ephydroidea</taxon>
        <taxon>Drosophilidae</taxon>
        <taxon>Drosophila</taxon>
        <taxon>Sophophora</taxon>
    </lineage>
</organism>
<protein>
    <recommendedName>
        <fullName evidence="1">UPAR/Ly6 domain-containing protein qvr</fullName>
    </recommendedName>
    <alternativeName>
        <fullName evidence="1">Protein quiver</fullName>
    </alternativeName>
    <alternativeName>
        <fullName evidence="1">Protein sleepless</fullName>
    </alternativeName>
</protein>
<dbReference type="EMBL" id="CM000071">
    <property type="protein sequence ID" value="EDY68906.1"/>
    <property type="status" value="ALT_SEQ"/>
    <property type="molecule type" value="Genomic_DNA"/>
</dbReference>
<dbReference type="FunCoup" id="B5E022">
    <property type="interactions" value="44"/>
</dbReference>
<dbReference type="STRING" id="46245.B5E022"/>
<dbReference type="GlyCosmos" id="B5E022">
    <property type="glycosylation" value="1 site, No reported glycans"/>
</dbReference>
<dbReference type="eggNOG" id="ENOG502TCD1">
    <property type="taxonomic scope" value="Eukaryota"/>
</dbReference>
<dbReference type="InParanoid" id="B5E022"/>
<dbReference type="ChiTaRS" id="qvr">
    <property type="organism name" value="fly"/>
</dbReference>
<dbReference type="Proteomes" id="UP000001819">
    <property type="component" value="Unplaced"/>
</dbReference>
<dbReference type="GO" id="GO:0045121">
    <property type="term" value="C:membrane raft"/>
    <property type="evidence" value="ECO:0007669"/>
    <property type="project" value="UniProtKB-SubCell"/>
</dbReference>
<dbReference type="GO" id="GO:0005886">
    <property type="term" value="C:plasma membrane"/>
    <property type="evidence" value="ECO:0000250"/>
    <property type="project" value="UniProtKB"/>
</dbReference>
<dbReference type="GO" id="GO:0098552">
    <property type="term" value="C:side of membrane"/>
    <property type="evidence" value="ECO:0007669"/>
    <property type="project" value="UniProtKB-KW"/>
</dbReference>
<dbReference type="GO" id="GO:0034235">
    <property type="term" value="F:GPI anchor binding"/>
    <property type="evidence" value="ECO:0000250"/>
    <property type="project" value="UniProtKB"/>
</dbReference>
<dbReference type="GO" id="GO:0045187">
    <property type="term" value="P:regulation of circadian sleep/wake cycle, sleep"/>
    <property type="evidence" value="ECO:0000250"/>
    <property type="project" value="UniProtKB"/>
</dbReference>
<dbReference type="GO" id="GO:0032222">
    <property type="term" value="P:regulation of synaptic transmission, cholinergic"/>
    <property type="evidence" value="ECO:0007669"/>
    <property type="project" value="InterPro"/>
</dbReference>
<dbReference type="GO" id="GO:0048511">
    <property type="term" value="P:rhythmic process"/>
    <property type="evidence" value="ECO:0007669"/>
    <property type="project" value="UniProtKB-KW"/>
</dbReference>
<dbReference type="GO" id="GO:0030431">
    <property type="term" value="P:sleep"/>
    <property type="evidence" value="ECO:0007669"/>
    <property type="project" value="InterPro"/>
</dbReference>
<dbReference type="CDD" id="cd23595">
    <property type="entry name" value="TFP_LU_ECD_Qvr"/>
    <property type="match status" value="1"/>
</dbReference>
<dbReference type="InterPro" id="IPR031424">
    <property type="entry name" value="QVR-like"/>
</dbReference>
<dbReference type="InterPro" id="IPR050975">
    <property type="entry name" value="Sleep_regulator"/>
</dbReference>
<dbReference type="PANTHER" id="PTHR33562">
    <property type="entry name" value="ATILLA, ISOFORM B-RELATED-RELATED"/>
    <property type="match status" value="1"/>
</dbReference>
<dbReference type="PANTHER" id="PTHR33562:SF31">
    <property type="entry name" value="PROTEIN QUIVER"/>
    <property type="match status" value="1"/>
</dbReference>
<dbReference type="Pfam" id="PF17064">
    <property type="entry name" value="QVR"/>
    <property type="match status" value="1"/>
</dbReference>
<proteinExistence type="inferred from homology"/>
<name>QVR_DROPS</name>
<reference evidence="5" key="1">
    <citation type="journal article" date="2005" name="Genome Res.">
        <title>Comparative genome sequencing of Drosophila pseudoobscura: chromosomal, gene, and cis-element evolution.</title>
        <authorList>
            <person name="Richards S."/>
            <person name="Liu Y."/>
            <person name="Bettencourt B.R."/>
            <person name="Hradecky P."/>
            <person name="Letovsky S."/>
            <person name="Nielsen R."/>
            <person name="Thornton K."/>
            <person name="Hubisz M.J."/>
            <person name="Chen R."/>
            <person name="Meisel R.P."/>
            <person name="Couronne O."/>
            <person name="Hua S."/>
            <person name="Smith M.A."/>
            <person name="Zhang P."/>
            <person name="Liu J."/>
            <person name="Bussemaker H.J."/>
            <person name="van Batenburg M.F."/>
            <person name="Howells S.L."/>
            <person name="Scherer S.E."/>
            <person name="Sodergren E."/>
            <person name="Matthews B.B."/>
            <person name="Crosby M.A."/>
            <person name="Schroeder A.J."/>
            <person name="Ortiz-Barrientos D."/>
            <person name="Rives C.M."/>
            <person name="Metzker M.L."/>
            <person name="Muzny D.M."/>
            <person name="Scott G."/>
            <person name="Steffen D."/>
            <person name="Wheeler D.A."/>
            <person name="Worley K.C."/>
            <person name="Havlak P."/>
            <person name="Durbin K.J."/>
            <person name="Egan A."/>
            <person name="Gill R."/>
            <person name="Hume J."/>
            <person name="Morgan M.B."/>
            <person name="Miner G."/>
            <person name="Hamilton C."/>
            <person name="Huang Y."/>
            <person name="Waldron L."/>
            <person name="Verduzco D."/>
            <person name="Clerc-Blankenburg K.P."/>
            <person name="Dubchak I."/>
            <person name="Noor M.A.F."/>
            <person name="Anderson W."/>
            <person name="White K.P."/>
            <person name="Clark A.G."/>
            <person name="Schaeffer S.W."/>
            <person name="Gelbart W.M."/>
            <person name="Weinstock G.M."/>
            <person name="Gibbs R.A."/>
        </authorList>
    </citation>
    <scope>NUCLEOTIDE SEQUENCE [LARGE SCALE GENOMIC DNA]</scope>
    <source>
        <strain>MV2-25 / Tucson 14011-0121.94</strain>
    </source>
</reference>
<evidence type="ECO:0000250" key="1">
    <source>
        <dbReference type="UniProtKB" id="B5A5T4"/>
    </source>
</evidence>
<evidence type="ECO:0000255" key="2"/>
<evidence type="ECO:0000255" key="3">
    <source>
        <dbReference type="PROSITE-ProRule" id="PRU00498"/>
    </source>
</evidence>
<evidence type="ECO:0000305" key="4"/>
<evidence type="ECO:0000312" key="5">
    <source>
        <dbReference type="EMBL" id="EDY68906.1"/>
    </source>
</evidence>
<feature type="signal peptide" evidence="2">
    <location>
        <begin position="1"/>
        <end position="33"/>
    </location>
</feature>
<feature type="chain" id="PRO_0000365466" description="UPAR/Ly6 domain-containing protein qvr" evidence="2">
    <location>
        <begin position="34"/>
        <end position="127"/>
    </location>
</feature>
<feature type="propeptide" id="PRO_0000365467" description="Removed in mature form" evidence="1">
    <location>
        <begin position="128"/>
        <end position="159"/>
    </location>
</feature>
<feature type="transmembrane region" description="Helical" evidence="2">
    <location>
        <begin position="137"/>
        <end position="157"/>
    </location>
</feature>
<feature type="region of interest" description="Loop 1; may be required for cell surface localization or be essential for protein folding" evidence="1">
    <location>
        <begin position="55"/>
        <end position="68"/>
    </location>
</feature>
<feature type="region of interest" description="Loop 2; required for interaction with Sh/shaker and nAChRalpha3/Nicotinic acetylcholine receptor alpha3" evidence="1">
    <location>
        <begin position="78"/>
        <end position="91"/>
    </location>
</feature>
<feature type="lipid moiety-binding region" description="GPI-anchor amidated asparagine" evidence="1">
    <location>
        <position position="127"/>
    </location>
</feature>
<feature type="glycosylation site" description="N-linked (GlcNAc...) asparagine" evidence="1 3">
    <location>
        <position position="58"/>
    </location>
</feature>
<feature type="disulfide bond" evidence="1">
    <location>
        <begin position="42"/>
        <end position="76"/>
    </location>
</feature>
<feature type="disulfide bond" evidence="1">
    <location>
        <begin position="45"/>
        <end position="53"/>
    </location>
</feature>
<feature type="disulfide bond" evidence="1">
    <location>
        <begin position="72"/>
        <end position="93"/>
    </location>
</feature>
<feature type="disulfide bond" evidence="1">
    <location>
        <begin position="108"/>
        <end position="119"/>
    </location>
</feature>
<feature type="disulfide bond" evidence="1">
    <location>
        <begin position="121"/>
        <end position="126"/>
    </location>
</feature>
<gene>
    <name evidence="1" type="primary">qvr</name>
    <name evidence="1" type="synonym">sss</name>
    <name type="ORF">GA24714</name>
</gene>
<comment type="function">
    <text evidence="1">Bifunctional regulator of neuronal activity in the mushroom body, and possibly other regions of the brain, that acts as a signaling molecule required for homeostatic regulation of sleep under normal conditions and after sleep deprivation. Reduces neuronal excitability by enhancing Sh/shaker K(+) channel activity; possibly by stabilizing Sh/shaker to increase protein levels, accelerating its activation kinetics, slowing C-type inactivation and enhancing recovery from inactivation. Specifically affects the A-type K(+) current. Antagonizes nicotinic acetylcholine receptors (nAChRs) to reduce synaptic transmission, possibly by preventing their localization to the cell surface. Required for regulation of neuromuscular excitability and plasticity at neuromuscular junctions.</text>
</comment>
<comment type="subunit">
    <text evidence="1">Interacts (via loop 2 of the three-fingered Ly-6 domain) with Sh/shaker; this interaction may stabilize both components of the complex and may be required for targeting or retention of Sh/shaker to neural cell projections. Interacts (via loop 2 of the three-fingered Ly-6 domain) with nAChRalpha3 and potentially other nicotinic acetylcholine receptors; this interaction is required for antagonism of nicotinic acetylcholine receptors.</text>
</comment>
<comment type="subcellular location">
    <subcellularLocation>
        <location evidence="1">Cell membrane</location>
        <topology evidence="1">Lipid-anchor</topology>
        <topology evidence="1">GPI-anchor</topology>
        <orientation evidence="1">Extracellular side</orientation>
    </subcellularLocation>
    <subcellularLocation>
        <location evidence="1">Membrane raft</location>
        <topology evidence="1">Lipid-anchor</topology>
        <topology evidence="1">GPI-anchor</topology>
        <orientation evidence="1">Extracellular side</orientation>
    </subcellularLocation>
</comment>
<comment type="tissue specificity">
    <text evidence="1">Expressed in mushroom body (at protein level); overlaps with expression of Sh/shaker and nicotinic acetylcholine receptor (nAChR) components also involved in sleep regulation. Expressed in the adult brain and head. Enriched in the mushroom body, anterior optic tubercle, superior protocerebrum, antennal nerve and visual projection neuron fibers projecting into the lobula plate of the optic lobe.</text>
</comment>
<comment type="domain">
    <text evidence="1">Consists of a single Ly-6 domain, adopting a three finger fold stabilized by 5 disulfide bonds. The first loop contains a region essential for protein folding or that is required for localization to the cell surface. The second loop mediates protein-protein interactions.</text>
</comment>
<comment type="PTM">
    <text evidence="1">N-glycosylated probably on Asn-58.</text>
</comment>
<comment type="similarity">
    <text evidence="4">Belongs to the quiver family.</text>
</comment>
<comment type="sequence caution" evidence="4">
    <conflict type="erroneous gene model prediction">
        <sequence resource="EMBL-CDS" id="EDY68906"/>
    </conflict>
</comment>
<accession>B5E022</accession>